<protein>
    <recommendedName>
        <fullName>Tubulin-specific chaperone C</fullName>
    </recommendedName>
    <alternativeName>
        <fullName>Tubulin-folding cofactor C</fullName>
        <shortName>CFC</shortName>
    </alternativeName>
</protein>
<organism>
    <name type="scientific">Pongo abelii</name>
    <name type="common">Sumatran orangutan</name>
    <name type="synonym">Pongo pygmaeus abelii</name>
    <dbReference type="NCBI Taxonomy" id="9601"/>
    <lineage>
        <taxon>Eukaryota</taxon>
        <taxon>Metazoa</taxon>
        <taxon>Chordata</taxon>
        <taxon>Craniata</taxon>
        <taxon>Vertebrata</taxon>
        <taxon>Euteleostomi</taxon>
        <taxon>Mammalia</taxon>
        <taxon>Eutheria</taxon>
        <taxon>Euarchontoglires</taxon>
        <taxon>Primates</taxon>
        <taxon>Haplorrhini</taxon>
        <taxon>Catarrhini</taxon>
        <taxon>Hominidae</taxon>
        <taxon>Pongo</taxon>
    </lineage>
</organism>
<comment type="function">
    <text evidence="1">Tubulin-folding protein; involved in the final step of the tubulin folding pathway.</text>
</comment>
<comment type="subunit">
    <text evidence="1">Supercomplex made of cofactors A to E. Cofactors A and D function by capturing and stabilizing tubulin in a quasi-native conformation. Cofactor E binds to the cofactor D-tubulin complex; interaction with cofactor C then causes the release of tubulin polypeptides that are committed to the native state (By similarity).</text>
</comment>
<comment type="subcellular location">
    <subcellularLocation>
        <location evidence="1">Cytoplasm</location>
    </subcellularLocation>
    <text evidence="1">Detected predominantly in the photoreceptor connecting cilium.</text>
</comment>
<comment type="similarity">
    <text evidence="5">Belongs to the TBCC family.</text>
</comment>
<keyword id="KW-0007">Acetylation</keyword>
<keyword id="KW-0143">Chaperone</keyword>
<keyword id="KW-0963">Cytoplasm</keyword>
<keyword id="KW-0597">Phosphoprotein</keyword>
<keyword id="KW-1185">Reference proteome</keyword>
<feature type="chain" id="PRO_0000285108" description="Tubulin-specific chaperone C">
    <location>
        <begin position="1"/>
        <end position="346"/>
    </location>
</feature>
<feature type="domain" description="C-CAP/cofactor C-like" evidence="3">
    <location>
        <begin position="171"/>
        <end position="323"/>
    </location>
</feature>
<feature type="region of interest" description="Disordered" evidence="4">
    <location>
        <begin position="1"/>
        <end position="54"/>
    </location>
</feature>
<feature type="compositionally biased region" description="Basic and acidic residues" evidence="4">
    <location>
        <begin position="28"/>
        <end position="54"/>
    </location>
</feature>
<feature type="modified residue" description="N-acetylmethionine" evidence="2">
    <location>
        <position position="1"/>
    </location>
</feature>
<feature type="modified residue" description="Phosphoserine" evidence="2">
    <location>
        <position position="80"/>
    </location>
</feature>
<feature type="modified residue" description="Phosphoserine" evidence="2">
    <location>
        <position position="168"/>
    </location>
</feature>
<dbReference type="EMBL" id="CR860861">
    <property type="protein sequence ID" value="CAH92969.1"/>
    <property type="molecule type" value="mRNA"/>
</dbReference>
<dbReference type="RefSeq" id="NP_001126753.1">
    <property type="nucleotide sequence ID" value="NM_001133281.1"/>
</dbReference>
<dbReference type="BMRB" id="Q5R5J7"/>
<dbReference type="SMR" id="Q5R5J7"/>
<dbReference type="FunCoup" id="Q5R5J7">
    <property type="interactions" value="1678"/>
</dbReference>
<dbReference type="STRING" id="9601.ENSPPYP00000019357"/>
<dbReference type="GeneID" id="100173755"/>
<dbReference type="KEGG" id="pon:100173755"/>
<dbReference type="CTD" id="6903"/>
<dbReference type="eggNOG" id="KOG2512">
    <property type="taxonomic scope" value="Eukaryota"/>
</dbReference>
<dbReference type="InParanoid" id="Q5R5J7"/>
<dbReference type="OrthoDB" id="194775at2759"/>
<dbReference type="Proteomes" id="UP000001595">
    <property type="component" value="Unplaced"/>
</dbReference>
<dbReference type="GO" id="GO:0005737">
    <property type="term" value="C:cytoplasm"/>
    <property type="evidence" value="ECO:0000250"/>
    <property type="project" value="UniProtKB"/>
</dbReference>
<dbReference type="GO" id="GO:0032391">
    <property type="term" value="C:photoreceptor connecting cilium"/>
    <property type="evidence" value="ECO:0000250"/>
    <property type="project" value="UniProtKB"/>
</dbReference>
<dbReference type="GO" id="GO:0003924">
    <property type="term" value="F:GTPase activity"/>
    <property type="evidence" value="ECO:0000250"/>
    <property type="project" value="UniProtKB"/>
</dbReference>
<dbReference type="GO" id="GO:0015631">
    <property type="term" value="F:tubulin binding"/>
    <property type="evidence" value="ECO:0007669"/>
    <property type="project" value="InterPro"/>
</dbReference>
<dbReference type="GO" id="GO:0007023">
    <property type="term" value="P:post-chaperonin tubulin folding pathway"/>
    <property type="evidence" value="ECO:0000250"/>
    <property type="project" value="UniProtKB"/>
</dbReference>
<dbReference type="GO" id="GO:0007021">
    <property type="term" value="P:tubulin complex assembly"/>
    <property type="evidence" value="ECO:0007669"/>
    <property type="project" value="TreeGrafter"/>
</dbReference>
<dbReference type="FunFam" id="1.20.58.1250:FF:000001">
    <property type="entry name" value="Tubulin-specific chaperone C"/>
    <property type="match status" value="1"/>
</dbReference>
<dbReference type="FunFam" id="2.160.20.70:FF:000007">
    <property type="entry name" value="tubulin-specific chaperone C"/>
    <property type="match status" value="1"/>
</dbReference>
<dbReference type="Gene3D" id="2.160.20.70">
    <property type="match status" value="1"/>
</dbReference>
<dbReference type="Gene3D" id="1.20.58.1250">
    <property type="entry name" value="Tubulin Binding Cofactor C, N-terminal domain"/>
    <property type="match status" value="1"/>
</dbReference>
<dbReference type="InterPro" id="IPR017901">
    <property type="entry name" value="C-CAP_CF_C-like"/>
</dbReference>
<dbReference type="InterPro" id="IPR016098">
    <property type="entry name" value="CAP/MinC_C"/>
</dbReference>
<dbReference type="InterPro" id="IPR006599">
    <property type="entry name" value="CARP_motif"/>
</dbReference>
<dbReference type="InterPro" id="IPR027684">
    <property type="entry name" value="TBCC"/>
</dbReference>
<dbReference type="InterPro" id="IPR031925">
    <property type="entry name" value="TBCC_N"/>
</dbReference>
<dbReference type="InterPro" id="IPR038397">
    <property type="entry name" value="TBCC_N_sf"/>
</dbReference>
<dbReference type="InterPro" id="IPR012945">
    <property type="entry name" value="Tubulin-bd_cofactor_C_dom"/>
</dbReference>
<dbReference type="PANTHER" id="PTHR15139">
    <property type="entry name" value="TUBULIN FOLDING COFACTOR C"/>
    <property type="match status" value="1"/>
</dbReference>
<dbReference type="PANTHER" id="PTHR15139:SF0">
    <property type="entry name" value="TUBULIN-SPECIFIC CHAPERONE C"/>
    <property type="match status" value="1"/>
</dbReference>
<dbReference type="Pfam" id="PF07986">
    <property type="entry name" value="TBCC"/>
    <property type="match status" value="1"/>
</dbReference>
<dbReference type="Pfam" id="PF16752">
    <property type="entry name" value="TBCC_N"/>
    <property type="match status" value="1"/>
</dbReference>
<dbReference type="SMART" id="SM00673">
    <property type="entry name" value="CARP"/>
    <property type="match status" value="2"/>
</dbReference>
<dbReference type="PROSITE" id="PS51329">
    <property type="entry name" value="C_CAP_COFACTOR_C"/>
    <property type="match status" value="1"/>
</dbReference>
<name>TBCC_PONAB</name>
<gene>
    <name type="primary">TBCC</name>
</gene>
<evidence type="ECO:0000250" key="1"/>
<evidence type="ECO:0000250" key="2">
    <source>
        <dbReference type="UniProtKB" id="Q15814"/>
    </source>
</evidence>
<evidence type="ECO:0000255" key="3">
    <source>
        <dbReference type="PROSITE-ProRule" id="PRU00659"/>
    </source>
</evidence>
<evidence type="ECO:0000256" key="4">
    <source>
        <dbReference type="SAM" id="MobiDB-lite"/>
    </source>
</evidence>
<evidence type="ECO:0000305" key="5"/>
<proteinExistence type="evidence at transcript level"/>
<accession>Q5R5J7</accession>
<sequence>MESVSCSAAPVRSGDMESQRDMSLVPERLQRREQERQLEVERRKQKRQNQEVEKENSHFFAATFARERAAVEELLERAESVERLEEAASRLQGLQKLINDSVFFLAAYDLRQGQEALARLQAALAERRRELQPKKRFAFKTRGKDAASCTKVDAAPGIPPAVESIQDSPLPKKAEGDLGSSWLCGFSNLESQVLEKRASELHQRDVLLTELSNCTVRLYGNPNTLRLTKAHSCKLLCGPVSTSVFLEDCSDCVLAVACQQLRIHSTKDTRIFLQVTSRAIVEDCSGIQFAPYTWSYPEIDKDFESSGLDRSKNNWNDVDDFNWLARDMASPNWCILPEEERNIQWD</sequence>
<reference key="1">
    <citation type="submission" date="2004-11" db="EMBL/GenBank/DDBJ databases">
        <authorList>
            <consortium name="The German cDNA consortium"/>
        </authorList>
    </citation>
    <scope>NUCLEOTIDE SEQUENCE [LARGE SCALE MRNA]</scope>
    <source>
        <tissue>Kidney</tissue>
    </source>
</reference>